<dbReference type="EMBL" id="CP000901">
    <property type="protein sequence ID" value="ABX88513.1"/>
    <property type="molecule type" value="Genomic_DNA"/>
</dbReference>
<dbReference type="RefSeq" id="WP_002208553.1">
    <property type="nucleotide sequence ID" value="NZ_CP009935.1"/>
</dbReference>
<dbReference type="KEGG" id="ypg:YpAngola_A3137"/>
<dbReference type="PATRIC" id="fig|349746.12.peg.4197"/>
<dbReference type="GO" id="GO:0005886">
    <property type="term" value="C:plasma membrane"/>
    <property type="evidence" value="ECO:0007669"/>
    <property type="project" value="UniProtKB-SubCell"/>
</dbReference>
<dbReference type="HAMAP" id="MF_01874">
    <property type="entry name" value="UPF0756"/>
    <property type="match status" value="1"/>
</dbReference>
<dbReference type="InterPro" id="IPR007382">
    <property type="entry name" value="UPF0756_TM"/>
</dbReference>
<dbReference type="PANTHER" id="PTHR38452">
    <property type="entry name" value="UPF0756 MEMBRANE PROTEIN YEAL"/>
    <property type="match status" value="1"/>
</dbReference>
<dbReference type="PANTHER" id="PTHR38452:SF1">
    <property type="entry name" value="UPF0756 MEMBRANE PROTEIN YEAL"/>
    <property type="match status" value="1"/>
</dbReference>
<dbReference type="Pfam" id="PF04284">
    <property type="entry name" value="DUF441"/>
    <property type="match status" value="1"/>
</dbReference>
<name>Y3137_YERPG</name>
<sequence>MAALDPTLLILLALAALGILSHNMTVTLAILILIAIRITPLNSFFPWVEKYGLTIGVLILTIGVMAPIASGKISASEVLHSFVQWKSILAIVVGVAVSWLGGRGVSLMTHQPSVVAGLLVGTVLGVALFKGVPVGPLIAAGLLSLVIGKS</sequence>
<gene>
    <name type="ordered locus">YpAngola_A3137</name>
</gene>
<keyword id="KW-1003">Cell membrane</keyword>
<keyword id="KW-0472">Membrane</keyword>
<keyword id="KW-0812">Transmembrane</keyword>
<keyword id="KW-1133">Transmembrane helix</keyword>
<proteinExistence type="inferred from homology"/>
<organism>
    <name type="scientific">Yersinia pestis bv. Antiqua (strain Angola)</name>
    <dbReference type="NCBI Taxonomy" id="349746"/>
    <lineage>
        <taxon>Bacteria</taxon>
        <taxon>Pseudomonadati</taxon>
        <taxon>Pseudomonadota</taxon>
        <taxon>Gammaproteobacteria</taxon>
        <taxon>Enterobacterales</taxon>
        <taxon>Yersiniaceae</taxon>
        <taxon>Yersinia</taxon>
    </lineage>
</organism>
<comment type="subcellular location">
    <subcellularLocation>
        <location evidence="1">Cell membrane</location>
        <topology evidence="1">Multi-pass membrane protein</topology>
    </subcellularLocation>
</comment>
<comment type="similarity">
    <text evidence="1">Belongs to the UPF0756 family.</text>
</comment>
<accession>A9R2H3</accession>
<protein>
    <recommendedName>
        <fullName evidence="1">UPF0756 membrane protein YpAngola_A3137</fullName>
    </recommendedName>
</protein>
<reference key="1">
    <citation type="journal article" date="2010" name="J. Bacteriol.">
        <title>Genome sequence of the deep-rooted Yersinia pestis strain Angola reveals new insights into the evolution and pangenome of the plague bacterium.</title>
        <authorList>
            <person name="Eppinger M."/>
            <person name="Worsham P.L."/>
            <person name="Nikolich M.P."/>
            <person name="Riley D.R."/>
            <person name="Sebastian Y."/>
            <person name="Mou S."/>
            <person name="Achtman M."/>
            <person name="Lindler L.E."/>
            <person name="Ravel J."/>
        </authorList>
    </citation>
    <scope>NUCLEOTIDE SEQUENCE [LARGE SCALE GENOMIC DNA]</scope>
    <source>
        <strain>Angola</strain>
    </source>
</reference>
<feature type="chain" id="PRO_0000388943" description="UPF0756 membrane protein YpAngola_A3137">
    <location>
        <begin position="1"/>
        <end position="150"/>
    </location>
</feature>
<feature type="transmembrane region" description="Helical" evidence="1">
    <location>
        <begin position="16"/>
        <end position="36"/>
    </location>
</feature>
<feature type="transmembrane region" description="Helical" evidence="1">
    <location>
        <begin position="51"/>
        <end position="71"/>
    </location>
</feature>
<feature type="transmembrane region" description="Helical" evidence="1">
    <location>
        <begin position="88"/>
        <end position="108"/>
    </location>
</feature>
<feature type="transmembrane region" description="Helical" evidence="1">
    <location>
        <begin position="114"/>
        <end position="134"/>
    </location>
</feature>
<evidence type="ECO:0000255" key="1">
    <source>
        <dbReference type="HAMAP-Rule" id="MF_01874"/>
    </source>
</evidence>